<proteinExistence type="inferred from homology"/>
<comment type="function">
    <text evidence="1">Catalyzes the ATP-dependent transfer of a sulfur to tRNA to produce 4-thiouridine in position 8 of tRNAs, which functions as a near-UV photosensor. Also catalyzes the transfer of sulfur to the sulfur carrier protein ThiS, forming ThiS-thiocarboxylate. This is a step in the synthesis of thiazole, in the thiamine biosynthesis pathway. The sulfur is donated as persulfide by IscS.</text>
</comment>
<comment type="catalytic activity">
    <reaction evidence="1">
        <text>[ThiI sulfur-carrier protein]-S-sulfanyl-L-cysteine + a uridine in tRNA + 2 reduced [2Fe-2S]-[ferredoxin] + ATP + H(+) = [ThiI sulfur-carrier protein]-L-cysteine + a 4-thiouridine in tRNA + 2 oxidized [2Fe-2S]-[ferredoxin] + AMP + diphosphate</text>
        <dbReference type="Rhea" id="RHEA:24176"/>
        <dbReference type="Rhea" id="RHEA-COMP:10000"/>
        <dbReference type="Rhea" id="RHEA-COMP:10001"/>
        <dbReference type="Rhea" id="RHEA-COMP:13337"/>
        <dbReference type="Rhea" id="RHEA-COMP:13338"/>
        <dbReference type="Rhea" id="RHEA-COMP:13339"/>
        <dbReference type="Rhea" id="RHEA-COMP:13340"/>
        <dbReference type="ChEBI" id="CHEBI:15378"/>
        <dbReference type="ChEBI" id="CHEBI:29950"/>
        <dbReference type="ChEBI" id="CHEBI:30616"/>
        <dbReference type="ChEBI" id="CHEBI:33019"/>
        <dbReference type="ChEBI" id="CHEBI:33737"/>
        <dbReference type="ChEBI" id="CHEBI:33738"/>
        <dbReference type="ChEBI" id="CHEBI:61963"/>
        <dbReference type="ChEBI" id="CHEBI:65315"/>
        <dbReference type="ChEBI" id="CHEBI:136798"/>
        <dbReference type="ChEBI" id="CHEBI:456215"/>
        <dbReference type="EC" id="2.8.1.4"/>
    </reaction>
</comment>
<comment type="catalytic activity">
    <reaction evidence="1">
        <text>[ThiS sulfur-carrier protein]-C-terminal Gly-Gly-AMP + S-sulfanyl-L-cysteinyl-[cysteine desulfurase] + AH2 = [ThiS sulfur-carrier protein]-C-terminal-Gly-aminoethanethioate + L-cysteinyl-[cysteine desulfurase] + A + AMP + 2 H(+)</text>
        <dbReference type="Rhea" id="RHEA:43340"/>
        <dbReference type="Rhea" id="RHEA-COMP:12157"/>
        <dbReference type="Rhea" id="RHEA-COMP:12158"/>
        <dbReference type="Rhea" id="RHEA-COMP:12910"/>
        <dbReference type="Rhea" id="RHEA-COMP:19908"/>
        <dbReference type="ChEBI" id="CHEBI:13193"/>
        <dbReference type="ChEBI" id="CHEBI:15378"/>
        <dbReference type="ChEBI" id="CHEBI:17499"/>
        <dbReference type="ChEBI" id="CHEBI:29950"/>
        <dbReference type="ChEBI" id="CHEBI:61963"/>
        <dbReference type="ChEBI" id="CHEBI:90618"/>
        <dbReference type="ChEBI" id="CHEBI:232372"/>
        <dbReference type="ChEBI" id="CHEBI:456215"/>
    </reaction>
</comment>
<comment type="pathway">
    <text evidence="1">Cofactor biosynthesis; thiamine diphosphate biosynthesis.</text>
</comment>
<comment type="subcellular location">
    <subcellularLocation>
        <location evidence="1">Cytoplasm</location>
    </subcellularLocation>
</comment>
<comment type="similarity">
    <text evidence="1">Belongs to the ThiI family.</text>
</comment>
<evidence type="ECO:0000255" key="1">
    <source>
        <dbReference type="HAMAP-Rule" id="MF_00021"/>
    </source>
</evidence>
<reference key="1">
    <citation type="journal article" date="2005" name="Nucleic Acids Res.">
        <title>Genome dynamics and diversity of Shigella species, the etiologic agents of bacillary dysentery.</title>
        <authorList>
            <person name="Yang F."/>
            <person name="Yang J."/>
            <person name="Zhang X."/>
            <person name="Chen L."/>
            <person name="Jiang Y."/>
            <person name="Yan Y."/>
            <person name="Tang X."/>
            <person name="Wang J."/>
            <person name="Xiong Z."/>
            <person name="Dong J."/>
            <person name="Xue Y."/>
            <person name="Zhu Y."/>
            <person name="Xu X."/>
            <person name="Sun L."/>
            <person name="Chen S."/>
            <person name="Nie H."/>
            <person name="Peng J."/>
            <person name="Xu J."/>
            <person name="Wang Y."/>
            <person name="Yuan Z."/>
            <person name="Wen Y."/>
            <person name="Yao Z."/>
            <person name="Shen Y."/>
            <person name="Qiang B."/>
            <person name="Hou Y."/>
            <person name="Yu J."/>
            <person name="Jin Q."/>
        </authorList>
    </citation>
    <scope>NUCLEOTIDE SEQUENCE [LARGE SCALE GENOMIC DNA]</scope>
    <source>
        <strain>Sd197</strain>
    </source>
</reference>
<keyword id="KW-0067">ATP-binding</keyword>
<keyword id="KW-0963">Cytoplasm</keyword>
<keyword id="KW-1015">Disulfide bond</keyword>
<keyword id="KW-0547">Nucleotide-binding</keyword>
<keyword id="KW-0676">Redox-active center</keyword>
<keyword id="KW-1185">Reference proteome</keyword>
<keyword id="KW-0694">RNA-binding</keyword>
<keyword id="KW-0784">Thiamine biosynthesis</keyword>
<keyword id="KW-0808">Transferase</keyword>
<keyword id="KW-0820">tRNA-binding</keyword>
<accession>Q32JI1</accession>
<gene>
    <name evidence="1" type="primary">thiI</name>
    <name type="ordered locus">SDY_0307</name>
</gene>
<feature type="chain" id="PRO_1000074278" description="tRNA sulfurtransferase">
    <location>
        <begin position="1"/>
        <end position="482"/>
    </location>
</feature>
<feature type="domain" description="THUMP" evidence="1">
    <location>
        <begin position="61"/>
        <end position="165"/>
    </location>
</feature>
<feature type="domain" description="Rhodanese" evidence="1">
    <location>
        <begin position="404"/>
        <end position="482"/>
    </location>
</feature>
<feature type="active site" description="Cysteine persulfide intermediate" evidence="1">
    <location>
        <position position="456"/>
    </location>
</feature>
<feature type="binding site" evidence="1">
    <location>
        <begin position="183"/>
        <end position="184"/>
    </location>
    <ligand>
        <name>ATP</name>
        <dbReference type="ChEBI" id="CHEBI:30616"/>
    </ligand>
</feature>
<feature type="binding site" evidence="1">
    <location>
        <position position="265"/>
    </location>
    <ligand>
        <name>ATP</name>
        <dbReference type="ChEBI" id="CHEBI:30616"/>
    </ligand>
</feature>
<feature type="binding site" evidence="1">
    <location>
        <position position="287"/>
    </location>
    <ligand>
        <name>ATP</name>
        <dbReference type="ChEBI" id="CHEBI:30616"/>
    </ligand>
</feature>
<feature type="binding site" evidence="1">
    <location>
        <position position="296"/>
    </location>
    <ligand>
        <name>ATP</name>
        <dbReference type="ChEBI" id="CHEBI:30616"/>
    </ligand>
</feature>
<feature type="disulfide bond" description="Redox-active" evidence="1">
    <location>
        <begin position="344"/>
        <end position="456"/>
    </location>
</feature>
<sequence length="482" mass="54962">MKFIIKLFPEITIKSQSVRLRFIKILTGNIRNVLKHYDETLAVVRHWDNIEVRAKDENQRLTIRDALTRIPGIHHILEVEDVPFTDMHDIFEKALVQYRDQLEGKTFCVRVKRSGKHDFSSIDVERYVGGGLNQHIESARVKLTNPDVTVHLEVEDDRLLLIKGRYEGIGGFPIGTQEDVLSLISGGFDSGVSSYMLMRRGCRVHYCFFNLGGAAHEIGVRQVAHYLWNRFGSSHRVRFVAINFEPVVGEILEKIDDGQMGVILKRMMVRAASKVAERYGVQALVTGEALGQVSSQTLTNLRLIDNVSDTLILRPLISYDKEHIINLARQIGTEDFARTMPEYCGVISKSPTVKAVKSKIEAEEEKFDFSILDKVVEEANNVDIREIAQQTEQEVVEVETVNDCGPNDVILDIRSVDEQEDKPLKVEGIDVVSLPFYKLSTKFGDLDQNRTWLLWCERGVMSRLQALYLREQGFNNVKVYRP</sequence>
<organism>
    <name type="scientific">Shigella dysenteriae serotype 1 (strain Sd197)</name>
    <dbReference type="NCBI Taxonomy" id="300267"/>
    <lineage>
        <taxon>Bacteria</taxon>
        <taxon>Pseudomonadati</taxon>
        <taxon>Pseudomonadota</taxon>
        <taxon>Gammaproteobacteria</taxon>
        <taxon>Enterobacterales</taxon>
        <taxon>Enterobacteriaceae</taxon>
        <taxon>Shigella</taxon>
    </lineage>
</organism>
<protein>
    <recommendedName>
        <fullName evidence="1">tRNA sulfurtransferase</fullName>
        <ecNumber evidence="1">2.8.1.4</ecNumber>
    </recommendedName>
    <alternativeName>
        <fullName evidence="1">Sulfur carrier protein ThiS sulfurtransferase</fullName>
    </alternativeName>
    <alternativeName>
        <fullName evidence="1">Thiamine biosynthesis protein ThiI</fullName>
    </alternativeName>
    <alternativeName>
        <fullName evidence="1">tRNA 4-thiouridine synthase</fullName>
    </alternativeName>
</protein>
<name>THII_SHIDS</name>
<dbReference type="EC" id="2.8.1.4" evidence="1"/>
<dbReference type="EMBL" id="CP000034">
    <property type="protein sequence ID" value="ABB60526.1"/>
    <property type="molecule type" value="Genomic_DNA"/>
</dbReference>
<dbReference type="RefSeq" id="WP_000668706.1">
    <property type="nucleotide sequence ID" value="NC_007606.1"/>
</dbReference>
<dbReference type="RefSeq" id="YP_402015.1">
    <property type="nucleotide sequence ID" value="NC_007606.1"/>
</dbReference>
<dbReference type="SMR" id="Q32JI1"/>
<dbReference type="STRING" id="300267.SDY_0307"/>
<dbReference type="EnsemblBacteria" id="ABB60526">
    <property type="protein sequence ID" value="ABB60526"/>
    <property type="gene ID" value="SDY_0307"/>
</dbReference>
<dbReference type="KEGG" id="sdy:SDY_0307"/>
<dbReference type="PATRIC" id="fig|300267.13.peg.352"/>
<dbReference type="HOGENOM" id="CLU_037952_4_1_6"/>
<dbReference type="UniPathway" id="UPA00060"/>
<dbReference type="Proteomes" id="UP000002716">
    <property type="component" value="Chromosome"/>
</dbReference>
<dbReference type="GO" id="GO:0005829">
    <property type="term" value="C:cytosol"/>
    <property type="evidence" value="ECO:0007669"/>
    <property type="project" value="TreeGrafter"/>
</dbReference>
<dbReference type="GO" id="GO:0005524">
    <property type="term" value="F:ATP binding"/>
    <property type="evidence" value="ECO:0007669"/>
    <property type="project" value="UniProtKB-UniRule"/>
</dbReference>
<dbReference type="GO" id="GO:0004810">
    <property type="term" value="F:CCA tRNA nucleotidyltransferase activity"/>
    <property type="evidence" value="ECO:0007669"/>
    <property type="project" value="InterPro"/>
</dbReference>
<dbReference type="GO" id="GO:0000049">
    <property type="term" value="F:tRNA binding"/>
    <property type="evidence" value="ECO:0007669"/>
    <property type="project" value="UniProtKB-UniRule"/>
</dbReference>
<dbReference type="GO" id="GO:0140741">
    <property type="term" value="F:tRNA-uracil-4 sulfurtransferase activity"/>
    <property type="evidence" value="ECO:0007669"/>
    <property type="project" value="UniProtKB-EC"/>
</dbReference>
<dbReference type="GO" id="GO:0009228">
    <property type="term" value="P:thiamine biosynthetic process"/>
    <property type="evidence" value="ECO:0007669"/>
    <property type="project" value="UniProtKB-KW"/>
</dbReference>
<dbReference type="GO" id="GO:0009229">
    <property type="term" value="P:thiamine diphosphate biosynthetic process"/>
    <property type="evidence" value="ECO:0007669"/>
    <property type="project" value="UniProtKB-UniRule"/>
</dbReference>
<dbReference type="GO" id="GO:0052837">
    <property type="term" value="P:thiazole biosynthetic process"/>
    <property type="evidence" value="ECO:0007669"/>
    <property type="project" value="InterPro"/>
</dbReference>
<dbReference type="GO" id="GO:0002937">
    <property type="term" value="P:tRNA 4-thiouridine biosynthesis"/>
    <property type="evidence" value="ECO:0007669"/>
    <property type="project" value="TreeGrafter"/>
</dbReference>
<dbReference type="CDD" id="cd01712">
    <property type="entry name" value="PPase_ThiI"/>
    <property type="match status" value="1"/>
</dbReference>
<dbReference type="CDD" id="cd00158">
    <property type="entry name" value="RHOD"/>
    <property type="match status" value="1"/>
</dbReference>
<dbReference type="CDD" id="cd11716">
    <property type="entry name" value="THUMP_ThiI"/>
    <property type="match status" value="1"/>
</dbReference>
<dbReference type="FunFam" id="3.30.2130.30:FF:000002">
    <property type="entry name" value="tRNA sulfurtransferase"/>
    <property type="match status" value="1"/>
</dbReference>
<dbReference type="FunFam" id="3.40.250.10:FF:000003">
    <property type="entry name" value="tRNA sulfurtransferase"/>
    <property type="match status" value="1"/>
</dbReference>
<dbReference type="FunFam" id="3.40.50.620:FF:000029">
    <property type="entry name" value="tRNA sulfurtransferase"/>
    <property type="match status" value="1"/>
</dbReference>
<dbReference type="Gene3D" id="3.30.2130.30">
    <property type="match status" value="1"/>
</dbReference>
<dbReference type="Gene3D" id="3.40.50.620">
    <property type="entry name" value="HUPs"/>
    <property type="match status" value="1"/>
</dbReference>
<dbReference type="Gene3D" id="3.40.250.10">
    <property type="entry name" value="Rhodanese-like domain"/>
    <property type="match status" value="1"/>
</dbReference>
<dbReference type="HAMAP" id="MF_00021">
    <property type="entry name" value="ThiI"/>
    <property type="match status" value="1"/>
</dbReference>
<dbReference type="InterPro" id="IPR001763">
    <property type="entry name" value="Rhodanese-like_dom"/>
</dbReference>
<dbReference type="InterPro" id="IPR036873">
    <property type="entry name" value="Rhodanese-like_dom_sf"/>
</dbReference>
<dbReference type="InterPro" id="IPR014729">
    <property type="entry name" value="Rossmann-like_a/b/a_fold"/>
</dbReference>
<dbReference type="InterPro" id="IPR020536">
    <property type="entry name" value="ThiI_AANH"/>
</dbReference>
<dbReference type="InterPro" id="IPR054173">
    <property type="entry name" value="ThiI_fer"/>
</dbReference>
<dbReference type="InterPro" id="IPR049961">
    <property type="entry name" value="ThiI_N"/>
</dbReference>
<dbReference type="InterPro" id="IPR026340">
    <property type="entry name" value="THII_Thiazole_biosynth_dom"/>
</dbReference>
<dbReference type="InterPro" id="IPR004114">
    <property type="entry name" value="THUMP_dom"/>
</dbReference>
<dbReference type="InterPro" id="IPR049962">
    <property type="entry name" value="THUMP_ThiI"/>
</dbReference>
<dbReference type="InterPro" id="IPR003720">
    <property type="entry name" value="tRNA_STrfase"/>
</dbReference>
<dbReference type="InterPro" id="IPR050102">
    <property type="entry name" value="tRNA_sulfurtransferase_ThiI"/>
</dbReference>
<dbReference type="NCBIfam" id="TIGR04271">
    <property type="entry name" value="ThiI_C_thiazole"/>
    <property type="match status" value="1"/>
</dbReference>
<dbReference type="NCBIfam" id="TIGR00342">
    <property type="entry name" value="tRNA uracil 4-sulfurtransferase ThiI"/>
    <property type="match status" value="1"/>
</dbReference>
<dbReference type="PANTHER" id="PTHR43209">
    <property type="entry name" value="TRNA SULFURTRANSFERASE"/>
    <property type="match status" value="1"/>
</dbReference>
<dbReference type="PANTHER" id="PTHR43209:SF1">
    <property type="entry name" value="TRNA SULFURTRANSFERASE"/>
    <property type="match status" value="1"/>
</dbReference>
<dbReference type="Pfam" id="PF02568">
    <property type="entry name" value="ThiI"/>
    <property type="match status" value="1"/>
</dbReference>
<dbReference type="Pfam" id="PF22025">
    <property type="entry name" value="ThiI_fer"/>
    <property type="match status" value="1"/>
</dbReference>
<dbReference type="Pfam" id="PF02926">
    <property type="entry name" value="THUMP"/>
    <property type="match status" value="1"/>
</dbReference>
<dbReference type="SMART" id="SM00981">
    <property type="entry name" value="THUMP"/>
    <property type="match status" value="1"/>
</dbReference>
<dbReference type="SUPFAM" id="SSF52402">
    <property type="entry name" value="Adenine nucleotide alpha hydrolases-like"/>
    <property type="match status" value="1"/>
</dbReference>
<dbReference type="SUPFAM" id="SSF52821">
    <property type="entry name" value="Rhodanese/Cell cycle control phosphatase"/>
    <property type="match status" value="1"/>
</dbReference>
<dbReference type="SUPFAM" id="SSF143437">
    <property type="entry name" value="THUMP domain-like"/>
    <property type="match status" value="1"/>
</dbReference>
<dbReference type="PROSITE" id="PS50206">
    <property type="entry name" value="RHODANESE_3"/>
    <property type="match status" value="1"/>
</dbReference>
<dbReference type="PROSITE" id="PS51165">
    <property type="entry name" value="THUMP"/>
    <property type="match status" value="1"/>
</dbReference>